<feature type="chain" id="PRO_1000126981" description="Large ribosomal subunit protein bL9">
    <location>
        <begin position="1"/>
        <end position="150"/>
    </location>
</feature>
<reference key="1">
    <citation type="journal article" date="2008" name="J. Bacteriol.">
        <title>Genome sequence of a nephritogenic and highly transformable M49 strain of Streptococcus pyogenes.</title>
        <authorList>
            <person name="McShan W.M."/>
            <person name="Ferretti J.J."/>
            <person name="Karasawa T."/>
            <person name="Suvorov A.N."/>
            <person name="Lin S."/>
            <person name="Qin B."/>
            <person name="Jia H."/>
            <person name="Kenton S."/>
            <person name="Najar F."/>
            <person name="Wu H."/>
            <person name="Scott J."/>
            <person name="Roe B.A."/>
            <person name="Savic D.J."/>
        </authorList>
    </citation>
    <scope>NUCLEOTIDE SEQUENCE [LARGE SCALE GENOMIC DNA]</scope>
    <source>
        <strain>NZ131</strain>
    </source>
</reference>
<comment type="function">
    <text evidence="1">Binds to the 23S rRNA.</text>
</comment>
<comment type="similarity">
    <text evidence="1">Belongs to the bacterial ribosomal protein bL9 family.</text>
</comment>
<protein>
    <recommendedName>
        <fullName evidence="1">Large ribosomal subunit protein bL9</fullName>
    </recommendedName>
    <alternativeName>
        <fullName evidence="2">50S ribosomal protein L9</fullName>
    </alternativeName>
</protein>
<sequence length="150" mass="16512">MKVIFLADVKGKGKKGEIKEVPTGYAQNFLIKKNLAKEATSQSIGELKGKQKAEEKAQAEILAEAQAVKAVLDEDKTRVQFQEKVGPDGRTFGSITAKKISEELQKQFGVKVDKRHIVLDHPIRAIGLIEVPVKLHKEVTAEIKLAITEA</sequence>
<keyword id="KW-0687">Ribonucleoprotein</keyword>
<keyword id="KW-0689">Ribosomal protein</keyword>
<keyword id="KW-0694">RNA-binding</keyword>
<keyword id="KW-0699">rRNA-binding</keyword>
<proteinExistence type="inferred from homology"/>
<gene>
    <name evidence="1" type="primary">rplI</name>
    <name type="ordered locus">Spy49_1789c</name>
</gene>
<organism>
    <name type="scientific">Streptococcus pyogenes serotype M49 (strain NZ131)</name>
    <dbReference type="NCBI Taxonomy" id="471876"/>
    <lineage>
        <taxon>Bacteria</taxon>
        <taxon>Bacillati</taxon>
        <taxon>Bacillota</taxon>
        <taxon>Bacilli</taxon>
        <taxon>Lactobacillales</taxon>
        <taxon>Streptococcaceae</taxon>
        <taxon>Streptococcus</taxon>
    </lineage>
</organism>
<dbReference type="EMBL" id="CP000829">
    <property type="protein sequence ID" value="ACI62036.1"/>
    <property type="molecule type" value="Genomic_DNA"/>
</dbReference>
<dbReference type="SMR" id="B5XJA2"/>
<dbReference type="KEGG" id="soz:Spy49_1789c"/>
<dbReference type="HOGENOM" id="CLU_078938_3_2_9"/>
<dbReference type="Proteomes" id="UP000001039">
    <property type="component" value="Chromosome"/>
</dbReference>
<dbReference type="GO" id="GO:1990904">
    <property type="term" value="C:ribonucleoprotein complex"/>
    <property type="evidence" value="ECO:0007669"/>
    <property type="project" value="UniProtKB-KW"/>
</dbReference>
<dbReference type="GO" id="GO:0005840">
    <property type="term" value="C:ribosome"/>
    <property type="evidence" value="ECO:0007669"/>
    <property type="project" value="UniProtKB-KW"/>
</dbReference>
<dbReference type="GO" id="GO:0019843">
    <property type="term" value="F:rRNA binding"/>
    <property type="evidence" value="ECO:0007669"/>
    <property type="project" value="UniProtKB-UniRule"/>
</dbReference>
<dbReference type="GO" id="GO:0003735">
    <property type="term" value="F:structural constituent of ribosome"/>
    <property type="evidence" value="ECO:0007669"/>
    <property type="project" value="InterPro"/>
</dbReference>
<dbReference type="GO" id="GO:0006412">
    <property type="term" value="P:translation"/>
    <property type="evidence" value="ECO:0007669"/>
    <property type="project" value="UniProtKB-UniRule"/>
</dbReference>
<dbReference type="FunFam" id="3.40.5.10:FF:000002">
    <property type="entry name" value="50S ribosomal protein L9"/>
    <property type="match status" value="1"/>
</dbReference>
<dbReference type="Gene3D" id="3.10.430.100">
    <property type="entry name" value="Ribosomal protein L9, C-terminal domain"/>
    <property type="match status" value="1"/>
</dbReference>
<dbReference type="Gene3D" id="3.40.5.10">
    <property type="entry name" value="Ribosomal protein L9, N-terminal domain"/>
    <property type="match status" value="1"/>
</dbReference>
<dbReference type="HAMAP" id="MF_00503">
    <property type="entry name" value="Ribosomal_bL9"/>
    <property type="match status" value="1"/>
</dbReference>
<dbReference type="InterPro" id="IPR000244">
    <property type="entry name" value="Ribosomal_bL9"/>
</dbReference>
<dbReference type="InterPro" id="IPR009027">
    <property type="entry name" value="Ribosomal_bL9/RNase_H1_N"/>
</dbReference>
<dbReference type="InterPro" id="IPR020594">
    <property type="entry name" value="Ribosomal_bL9_bac/chp"/>
</dbReference>
<dbReference type="InterPro" id="IPR020069">
    <property type="entry name" value="Ribosomal_bL9_C"/>
</dbReference>
<dbReference type="InterPro" id="IPR036791">
    <property type="entry name" value="Ribosomal_bL9_C_sf"/>
</dbReference>
<dbReference type="InterPro" id="IPR020070">
    <property type="entry name" value="Ribosomal_bL9_N"/>
</dbReference>
<dbReference type="InterPro" id="IPR036935">
    <property type="entry name" value="Ribosomal_bL9_N_sf"/>
</dbReference>
<dbReference type="NCBIfam" id="TIGR00158">
    <property type="entry name" value="L9"/>
    <property type="match status" value="1"/>
</dbReference>
<dbReference type="PANTHER" id="PTHR21368">
    <property type="entry name" value="50S RIBOSOMAL PROTEIN L9"/>
    <property type="match status" value="1"/>
</dbReference>
<dbReference type="Pfam" id="PF03948">
    <property type="entry name" value="Ribosomal_L9_C"/>
    <property type="match status" value="1"/>
</dbReference>
<dbReference type="Pfam" id="PF01281">
    <property type="entry name" value="Ribosomal_L9_N"/>
    <property type="match status" value="1"/>
</dbReference>
<dbReference type="SUPFAM" id="SSF55658">
    <property type="entry name" value="L9 N-domain-like"/>
    <property type="match status" value="1"/>
</dbReference>
<dbReference type="SUPFAM" id="SSF55653">
    <property type="entry name" value="Ribosomal protein L9 C-domain"/>
    <property type="match status" value="1"/>
</dbReference>
<dbReference type="PROSITE" id="PS00651">
    <property type="entry name" value="RIBOSOMAL_L9"/>
    <property type="match status" value="1"/>
</dbReference>
<evidence type="ECO:0000255" key="1">
    <source>
        <dbReference type="HAMAP-Rule" id="MF_00503"/>
    </source>
</evidence>
<evidence type="ECO:0000305" key="2"/>
<name>RL9_STRPZ</name>
<accession>B5XJA2</accession>